<feature type="initiator methionine" description="Removed" evidence="1">
    <location>
        <position position="1"/>
    </location>
</feature>
<feature type="chain" id="PRO_0000263449" description="Elongation factor G">
    <location>
        <begin position="2"/>
        <end position="704"/>
    </location>
</feature>
<feature type="domain" description="tr-type G">
    <location>
        <begin position="8"/>
        <end position="290"/>
    </location>
</feature>
<feature type="binding site" evidence="2">
    <location>
        <begin position="17"/>
        <end position="24"/>
    </location>
    <ligand>
        <name>GTP</name>
        <dbReference type="ChEBI" id="CHEBI:37565"/>
    </ligand>
</feature>
<feature type="binding site" evidence="2">
    <location>
        <begin position="88"/>
        <end position="92"/>
    </location>
    <ligand>
        <name>GTP</name>
        <dbReference type="ChEBI" id="CHEBI:37565"/>
    </ligand>
</feature>
<feature type="binding site" evidence="2">
    <location>
        <begin position="142"/>
        <end position="145"/>
    </location>
    <ligand>
        <name>GTP</name>
        <dbReference type="ChEBI" id="CHEBI:37565"/>
    </ligand>
</feature>
<feature type="modified residue" description="N6-acetyllysine" evidence="1">
    <location>
        <position position="504"/>
    </location>
</feature>
<feature type="modified residue" description="N6-acetyllysine" evidence="1">
    <location>
        <position position="643"/>
    </location>
</feature>
<protein>
    <recommendedName>
        <fullName evidence="2">Elongation factor G</fullName>
        <shortName evidence="2">EF-G</shortName>
    </recommendedName>
</protein>
<proteinExistence type="inferred from homology"/>
<gene>
    <name evidence="2" type="primary">fusA</name>
    <name type="ordered locus">ECP_3430</name>
</gene>
<evidence type="ECO:0000250" key="1"/>
<evidence type="ECO:0000255" key="2">
    <source>
        <dbReference type="HAMAP-Rule" id="MF_00054"/>
    </source>
</evidence>
<name>EFG_ECOL5</name>
<organism>
    <name type="scientific">Escherichia coli O6:K15:H31 (strain 536 / UPEC)</name>
    <dbReference type="NCBI Taxonomy" id="362663"/>
    <lineage>
        <taxon>Bacteria</taxon>
        <taxon>Pseudomonadati</taxon>
        <taxon>Pseudomonadota</taxon>
        <taxon>Gammaproteobacteria</taxon>
        <taxon>Enterobacterales</taxon>
        <taxon>Enterobacteriaceae</taxon>
        <taxon>Escherichia</taxon>
    </lineage>
</organism>
<comment type="function">
    <text evidence="2">Catalyzes the GTP-dependent ribosomal translocation step during translation elongation. During this step, the ribosome changes from the pre-translocational (PRE) to the post-translocational (POST) state as the newly formed A-site-bound peptidyl-tRNA and P-site-bound deacylated tRNA move to the P and E sites, respectively. Catalyzes the coordinated movement of the two tRNA molecules, the mRNA and conformational changes in the ribosome.</text>
</comment>
<comment type="subcellular location">
    <subcellularLocation>
        <location evidence="2">Cytoplasm</location>
    </subcellularLocation>
</comment>
<comment type="similarity">
    <text evidence="2">Belongs to the TRAFAC class translation factor GTPase superfamily. Classic translation factor GTPase family. EF-G/EF-2 subfamily.</text>
</comment>
<keyword id="KW-0007">Acetylation</keyword>
<keyword id="KW-0963">Cytoplasm</keyword>
<keyword id="KW-0251">Elongation factor</keyword>
<keyword id="KW-0342">GTP-binding</keyword>
<keyword id="KW-0547">Nucleotide-binding</keyword>
<keyword id="KW-0648">Protein biosynthesis</keyword>
<dbReference type="EMBL" id="CP000247">
    <property type="protein sequence ID" value="ABG71410.1"/>
    <property type="molecule type" value="Genomic_DNA"/>
</dbReference>
<dbReference type="RefSeq" id="WP_000124700.1">
    <property type="nucleotide sequence ID" value="NC_008253.1"/>
</dbReference>
<dbReference type="SMR" id="Q0TCB9"/>
<dbReference type="GeneID" id="93778658"/>
<dbReference type="KEGG" id="ecp:ECP_3430"/>
<dbReference type="HOGENOM" id="CLU_002794_4_1_6"/>
<dbReference type="Proteomes" id="UP000009182">
    <property type="component" value="Chromosome"/>
</dbReference>
<dbReference type="GO" id="GO:0005737">
    <property type="term" value="C:cytoplasm"/>
    <property type="evidence" value="ECO:0007669"/>
    <property type="project" value="UniProtKB-SubCell"/>
</dbReference>
<dbReference type="GO" id="GO:0005525">
    <property type="term" value="F:GTP binding"/>
    <property type="evidence" value="ECO:0007669"/>
    <property type="project" value="UniProtKB-UniRule"/>
</dbReference>
<dbReference type="GO" id="GO:0003924">
    <property type="term" value="F:GTPase activity"/>
    <property type="evidence" value="ECO:0007669"/>
    <property type="project" value="InterPro"/>
</dbReference>
<dbReference type="GO" id="GO:0097216">
    <property type="term" value="F:guanosine tetraphosphate binding"/>
    <property type="evidence" value="ECO:0007669"/>
    <property type="project" value="UniProtKB-ARBA"/>
</dbReference>
<dbReference type="GO" id="GO:0003746">
    <property type="term" value="F:translation elongation factor activity"/>
    <property type="evidence" value="ECO:0007669"/>
    <property type="project" value="UniProtKB-UniRule"/>
</dbReference>
<dbReference type="GO" id="GO:0032790">
    <property type="term" value="P:ribosome disassembly"/>
    <property type="evidence" value="ECO:0007669"/>
    <property type="project" value="TreeGrafter"/>
</dbReference>
<dbReference type="CDD" id="cd01886">
    <property type="entry name" value="EF-G"/>
    <property type="match status" value="1"/>
</dbReference>
<dbReference type="CDD" id="cd16262">
    <property type="entry name" value="EFG_III"/>
    <property type="match status" value="1"/>
</dbReference>
<dbReference type="CDD" id="cd01434">
    <property type="entry name" value="EFG_mtEFG1_IV"/>
    <property type="match status" value="1"/>
</dbReference>
<dbReference type="CDD" id="cd03713">
    <property type="entry name" value="EFG_mtEFG_C"/>
    <property type="match status" value="1"/>
</dbReference>
<dbReference type="CDD" id="cd04088">
    <property type="entry name" value="EFG_mtEFG_II"/>
    <property type="match status" value="1"/>
</dbReference>
<dbReference type="FunFam" id="2.40.30.10:FF:000006">
    <property type="entry name" value="Elongation factor G"/>
    <property type="match status" value="1"/>
</dbReference>
<dbReference type="FunFam" id="3.30.230.10:FF:000003">
    <property type="entry name" value="Elongation factor G"/>
    <property type="match status" value="1"/>
</dbReference>
<dbReference type="FunFam" id="3.30.70.240:FF:000001">
    <property type="entry name" value="Elongation factor G"/>
    <property type="match status" value="1"/>
</dbReference>
<dbReference type="FunFam" id="3.30.70.870:FF:000001">
    <property type="entry name" value="Elongation factor G"/>
    <property type="match status" value="1"/>
</dbReference>
<dbReference type="FunFam" id="3.40.50.300:FF:000029">
    <property type="entry name" value="Elongation factor G"/>
    <property type="match status" value="1"/>
</dbReference>
<dbReference type="Gene3D" id="3.30.230.10">
    <property type="match status" value="1"/>
</dbReference>
<dbReference type="Gene3D" id="3.30.70.240">
    <property type="match status" value="1"/>
</dbReference>
<dbReference type="Gene3D" id="3.30.70.870">
    <property type="entry name" value="Elongation Factor G (Translational Gtpase), domain 3"/>
    <property type="match status" value="1"/>
</dbReference>
<dbReference type="Gene3D" id="3.40.50.300">
    <property type="entry name" value="P-loop containing nucleotide triphosphate hydrolases"/>
    <property type="match status" value="1"/>
</dbReference>
<dbReference type="Gene3D" id="2.40.30.10">
    <property type="entry name" value="Translation factors"/>
    <property type="match status" value="1"/>
</dbReference>
<dbReference type="HAMAP" id="MF_00054_B">
    <property type="entry name" value="EF_G_EF_2_B"/>
    <property type="match status" value="1"/>
</dbReference>
<dbReference type="InterPro" id="IPR041095">
    <property type="entry name" value="EFG_II"/>
</dbReference>
<dbReference type="InterPro" id="IPR009022">
    <property type="entry name" value="EFG_III"/>
</dbReference>
<dbReference type="InterPro" id="IPR035647">
    <property type="entry name" value="EFG_III/V"/>
</dbReference>
<dbReference type="InterPro" id="IPR047872">
    <property type="entry name" value="EFG_IV"/>
</dbReference>
<dbReference type="InterPro" id="IPR035649">
    <property type="entry name" value="EFG_V"/>
</dbReference>
<dbReference type="InterPro" id="IPR000640">
    <property type="entry name" value="EFG_V-like"/>
</dbReference>
<dbReference type="InterPro" id="IPR004161">
    <property type="entry name" value="EFTu-like_2"/>
</dbReference>
<dbReference type="InterPro" id="IPR031157">
    <property type="entry name" value="G_TR_CS"/>
</dbReference>
<dbReference type="InterPro" id="IPR027417">
    <property type="entry name" value="P-loop_NTPase"/>
</dbReference>
<dbReference type="InterPro" id="IPR020568">
    <property type="entry name" value="Ribosomal_Su5_D2-typ_SF"/>
</dbReference>
<dbReference type="InterPro" id="IPR014721">
    <property type="entry name" value="Ribsml_uS5_D2-typ_fold_subgr"/>
</dbReference>
<dbReference type="InterPro" id="IPR005225">
    <property type="entry name" value="Small_GTP-bd"/>
</dbReference>
<dbReference type="InterPro" id="IPR000795">
    <property type="entry name" value="T_Tr_GTP-bd_dom"/>
</dbReference>
<dbReference type="InterPro" id="IPR009000">
    <property type="entry name" value="Transl_B-barrel_sf"/>
</dbReference>
<dbReference type="InterPro" id="IPR004540">
    <property type="entry name" value="Transl_elong_EFG/EF2"/>
</dbReference>
<dbReference type="InterPro" id="IPR005517">
    <property type="entry name" value="Transl_elong_EFG/EF2_IV"/>
</dbReference>
<dbReference type="NCBIfam" id="TIGR00484">
    <property type="entry name" value="EF-G"/>
    <property type="match status" value="1"/>
</dbReference>
<dbReference type="NCBIfam" id="NF009381">
    <property type="entry name" value="PRK12740.1-5"/>
    <property type="match status" value="1"/>
</dbReference>
<dbReference type="NCBIfam" id="TIGR00231">
    <property type="entry name" value="small_GTP"/>
    <property type="match status" value="1"/>
</dbReference>
<dbReference type="PANTHER" id="PTHR43261:SF1">
    <property type="entry name" value="RIBOSOME-RELEASING FACTOR 2, MITOCHONDRIAL"/>
    <property type="match status" value="1"/>
</dbReference>
<dbReference type="PANTHER" id="PTHR43261">
    <property type="entry name" value="TRANSLATION ELONGATION FACTOR G-RELATED"/>
    <property type="match status" value="1"/>
</dbReference>
<dbReference type="Pfam" id="PF00679">
    <property type="entry name" value="EFG_C"/>
    <property type="match status" value="1"/>
</dbReference>
<dbReference type="Pfam" id="PF14492">
    <property type="entry name" value="EFG_III"/>
    <property type="match status" value="1"/>
</dbReference>
<dbReference type="Pfam" id="PF03764">
    <property type="entry name" value="EFG_IV"/>
    <property type="match status" value="1"/>
</dbReference>
<dbReference type="Pfam" id="PF00009">
    <property type="entry name" value="GTP_EFTU"/>
    <property type="match status" value="1"/>
</dbReference>
<dbReference type="Pfam" id="PF03144">
    <property type="entry name" value="GTP_EFTU_D2"/>
    <property type="match status" value="1"/>
</dbReference>
<dbReference type="PRINTS" id="PR00315">
    <property type="entry name" value="ELONGATNFCT"/>
</dbReference>
<dbReference type="SMART" id="SM00838">
    <property type="entry name" value="EFG_C"/>
    <property type="match status" value="1"/>
</dbReference>
<dbReference type="SMART" id="SM00889">
    <property type="entry name" value="EFG_IV"/>
    <property type="match status" value="1"/>
</dbReference>
<dbReference type="SUPFAM" id="SSF54980">
    <property type="entry name" value="EF-G C-terminal domain-like"/>
    <property type="match status" value="2"/>
</dbReference>
<dbReference type="SUPFAM" id="SSF52540">
    <property type="entry name" value="P-loop containing nucleoside triphosphate hydrolases"/>
    <property type="match status" value="1"/>
</dbReference>
<dbReference type="SUPFAM" id="SSF54211">
    <property type="entry name" value="Ribosomal protein S5 domain 2-like"/>
    <property type="match status" value="1"/>
</dbReference>
<dbReference type="SUPFAM" id="SSF50447">
    <property type="entry name" value="Translation proteins"/>
    <property type="match status" value="1"/>
</dbReference>
<dbReference type="PROSITE" id="PS00301">
    <property type="entry name" value="G_TR_1"/>
    <property type="match status" value="1"/>
</dbReference>
<dbReference type="PROSITE" id="PS51722">
    <property type="entry name" value="G_TR_2"/>
    <property type="match status" value="1"/>
</dbReference>
<accession>Q0TCB9</accession>
<sequence>MARTTPIARYRNIGISAHIDAGKTTTTERILFYTGVNHKIGEVHDGAATMDWMEQEQERGITITSAATTAFWSGMAKQYEPHRINIIDTPGHVDFTIEVERSMRVLDGAVMVYCAVGGVQPQSETVWRQANKYKVPRIAFVNKMDRMGANFLKVVNQIKTRLGANPVPLQLAIGAEEHFTGVVDLVKMKAINWNDADQGVTFEYEDIPADMVELANEWHQNLIESAAEASEELMEKYLGGEELTEAEIKGALRQRVLNNEIILVTCGSAFKNKGVQAMLDAVIDYLPSPVDVPAINGILDDGKDTPAERHASDDEPFSALAFKIATDPFVGNLTFFRVYSGVVNSGDTVLNSVKAARERFGRIVQMHANKREEIKEVRAGDIAAAIGLKDVTTGDTLCDPDAPIILERMEFPEPVISIAVEPKTKADQEKMGLALGRLAKEDPSFRVWTDEESNQTIIAGMGELHLDIIVDRMKREFNVEANVGKPQVAYRETIRQKVTDVEGKHAKQSGGRGQYGHVVIDMYPLEPGSNPKGYEFINDIKGGVIPGEYIPAVDKGIQEQLKAGPLAGYPVVDMGIRLHFGSYHDVDSSELAFKLAASIAFKEGFKKAKPVLLEPIMKVEVETPEENTGDVIGDLSRRRGMLKGQESEVTGVKIHAEVPLSEMFGYATQLRSLTKGRASYTMEFLKYDEAPSNVAQAVIEARGK</sequence>
<reference key="1">
    <citation type="journal article" date="2006" name="Mol. Microbiol.">
        <title>Role of pathogenicity island-associated integrases in the genome plasticity of uropathogenic Escherichia coli strain 536.</title>
        <authorList>
            <person name="Hochhut B."/>
            <person name="Wilde C."/>
            <person name="Balling G."/>
            <person name="Middendorf B."/>
            <person name="Dobrindt U."/>
            <person name="Brzuszkiewicz E."/>
            <person name="Gottschalk G."/>
            <person name="Carniel E."/>
            <person name="Hacker J."/>
        </authorList>
    </citation>
    <scope>NUCLEOTIDE SEQUENCE [LARGE SCALE GENOMIC DNA]</scope>
    <source>
        <strain>536 / UPEC</strain>
    </source>
</reference>